<feature type="chain" id="PRO_0000066748" description="Neurotoxin BmK-II">
    <location>
        <begin position="1"/>
        <end position="64"/>
    </location>
</feature>
<feature type="domain" description="LCN-type CS-alpha/beta" evidence="1">
    <location>
        <begin position="2"/>
        <end position="64"/>
    </location>
</feature>
<feature type="disulfide bond" evidence="1">
    <location>
        <begin position="12"/>
        <end position="63"/>
    </location>
</feature>
<feature type="disulfide bond" evidence="1">
    <location>
        <begin position="16"/>
        <end position="36"/>
    </location>
</feature>
<feature type="disulfide bond" evidence="1">
    <location>
        <begin position="22"/>
        <end position="46"/>
    </location>
</feature>
<feature type="disulfide bond" evidence="1">
    <location>
        <begin position="26"/>
        <end position="48"/>
    </location>
</feature>
<reference key="1">
    <citation type="journal article" date="1996" name="Toxicon">
        <title>Two neurotoxins (BmK I and BmK II) from the venom of the scorpion Buthus martensi Karsch: purification, amino acid sequences and assessment of specific activity.</title>
        <authorList>
            <person name="Ji Y.-H."/>
            <person name="Mansuelle P."/>
            <person name="Terakawa S."/>
            <person name="Kopeyan C."/>
            <person name="Yanaihara N."/>
            <person name="Hsu K."/>
            <person name="Rochat H."/>
        </authorList>
    </citation>
    <scope>PROTEIN SEQUENCE</scope>
    <scope>CHARACTERIZATION</scope>
    <source>
        <tissue>Venom</tissue>
    </source>
</reference>
<evidence type="ECO:0000255" key="1">
    <source>
        <dbReference type="PROSITE-ProRule" id="PRU01210"/>
    </source>
</evidence>
<evidence type="ECO:0000305" key="2"/>
<organism>
    <name type="scientific">Olivierus martensii</name>
    <name type="common">Manchurian scorpion</name>
    <name type="synonym">Mesobuthus martensii</name>
    <dbReference type="NCBI Taxonomy" id="34649"/>
    <lineage>
        <taxon>Eukaryota</taxon>
        <taxon>Metazoa</taxon>
        <taxon>Ecdysozoa</taxon>
        <taxon>Arthropoda</taxon>
        <taxon>Chelicerata</taxon>
        <taxon>Arachnida</taxon>
        <taxon>Scorpiones</taxon>
        <taxon>Buthida</taxon>
        <taxon>Buthoidea</taxon>
        <taxon>Buthidae</taxon>
        <taxon>Olivierus</taxon>
    </lineage>
</organism>
<dbReference type="SMR" id="P59360"/>
<dbReference type="GO" id="GO:0005576">
    <property type="term" value="C:extracellular region"/>
    <property type="evidence" value="ECO:0007669"/>
    <property type="project" value="UniProtKB-SubCell"/>
</dbReference>
<dbReference type="GO" id="GO:0019871">
    <property type="term" value="F:sodium channel inhibitor activity"/>
    <property type="evidence" value="ECO:0007669"/>
    <property type="project" value="InterPro"/>
</dbReference>
<dbReference type="GO" id="GO:0090729">
    <property type="term" value="F:toxin activity"/>
    <property type="evidence" value="ECO:0007669"/>
    <property type="project" value="UniProtKB-KW"/>
</dbReference>
<dbReference type="GO" id="GO:0006952">
    <property type="term" value="P:defense response"/>
    <property type="evidence" value="ECO:0007669"/>
    <property type="project" value="InterPro"/>
</dbReference>
<dbReference type="CDD" id="cd23106">
    <property type="entry name" value="neurotoxins_LC_scorpion"/>
    <property type="match status" value="1"/>
</dbReference>
<dbReference type="FunFam" id="3.30.30.10:FF:000002">
    <property type="entry name" value="Alpha-like toxin BmK-M1"/>
    <property type="match status" value="1"/>
</dbReference>
<dbReference type="Gene3D" id="3.30.30.10">
    <property type="entry name" value="Knottin, scorpion toxin-like"/>
    <property type="match status" value="1"/>
</dbReference>
<dbReference type="InterPro" id="IPR044062">
    <property type="entry name" value="LCN-type_CS_alpha_beta_dom"/>
</dbReference>
<dbReference type="InterPro" id="IPR003614">
    <property type="entry name" value="Scorpion_toxin-like"/>
</dbReference>
<dbReference type="InterPro" id="IPR036574">
    <property type="entry name" value="Scorpion_toxin-like_sf"/>
</dbReference>
<dbReference type="InterPro" id="IPR018218">
    <property type="entry name" value="Scorpion_toxinL"/>
</dbReference>
<dbReference type="InterPro" id="IPR002061">
    <property type="entry name" value="Scorpion_toxinL/defensin"/>
</dbReference>
<dbReference type="Pfam" id="PF00537">
    <property type="entry name" value="Toxin_3"/>
    <property type="match status" value="1"/>
</dbReference>
<dbReference type="PRINTS" id="PR00285">
    <property type="entry name" value="SCORPNTOXIN"/>
</dbReference>
<dbReference type="PRINTS" id="PR00284">
    <property type="entry name" value="TOXIN"/>
</dbReference>
<dbReference type="SMART" id="SM00505">
    <property type="entry name" value="Knot1"/>
    <property type="match status" value="1"/>
</dbReference>
<dbReference type="SUPFAM" id="SSF57095">
    <property type="entry name" value="Scorpion toxin-like"/>
    <property type="match status" value="1"/>
</dbReference>
<dbReference type="PROSITE" id="PS51863">
    <property type="entry name" value="LCN_CSAB"/>
    <property type="match status" value="1"/>
</dbReference>
<comment type="function">
    <text>Binds to sodium channels (Nav) and inhibits the inactivation of the activated channels, thereby blocking neuronal transmission. This toxin is active against mammals and insects. BmK-II is 6-fold less toxic than BmK-I.</text>
</comment>
<comment type="subcellular location">
    <subcellularLocation>
        <location>Secreted</location>
    </subcellularLocation>
</comment>
<comment type="tissue specificity">
    <text>Expressed by the venom gland.</text>
</comment>
<comment type="domain">
    <text evidence="2">Has the structural arrangement of an alpha-helix connected to antiparallel beta-sheets by disulfide bonds (CS-alpha/beta).</text>
</comment>
<comment type="similarity">
    <text evidence="2">Belongs to the long (4 C-C) scorpion toxin superfamily. Sodium channel inhibitor family. Alpha subfamily.</text>
</comment>
<protein>
    <recommendedName>
        <fullName>Neurotoxin BmK-II</fullName>
        <shortName>BmK II</shortName>
        <shortName>BmKII</shortName>
    </recommendedName>
    <alternativeName>
        <fullName>BmK2</fullName>
    </alternativeName>
</protein>
<name>SCX2_OLIMR</name>
<accession>P59360</accession>
<sequence length="64" mass="7226">VRDAYIAKPHNCVYECARNEYCNDLCTKDGAKSGYCQWVGKYGNGCWCIELPDNVPIRIPGNCH</sequence>
<keyword id="KW-0903">Direct protein sequencing</keyword>
<keyword id="KW-1015">Disulfide bond</keyword>
<keyword id="KW-0872">Ion channel impairing toxin</keyword>
<keyword id="KW-0528">Neurotoxin</keyword>
<keyword id="KW-0964">Secreted</keyword>
<keyword id="KW-0800">Toxin</keyword>
<keyword id="KW-0738">Voltage-gated sodium channel impairing toxin</keyword>
<proteinExistence type="evidence at protein level"/>